<feature type="signal peptide" evidence="1">
    <location>
        <begin position="1"/>
        <end position="20"/>
    </location>
</feature>
<feature type="chain" id="PRO_1000123972" description="Flagellar P-ring protein">
    <location>
        <begin position="21"/>
        <end position="366"/>
    </location>
</feature>
<comment type="function">
    <text evidence="1">Assembles around the rod to form the L-ring and probably protects the motor/basal body from shearing forces during rotation.</text>
</comment>
<comment type="subunit">
    <text evidence="1">The basal body constitutes a major portion of the flagellar organelle and consists of four rings (L,P,S, and M) mounted on a central rod.</text>
</comment>
<comment type="subcellular location">
    <subcellularLocation>
        <location evidence="1">Periplasm</location>
    </subcellularLocation>
    <subcellularLocation>
        <location evidence="1">Bacterial flagellum basal body</location>
    </subcellularLocation>
</comment>
<comment type="similarity">
    <text evidence="1">Belongs to the FlgI family.</text>
</comment>
<keyword id="KW-0975">Bacterial flagellum</keyword>
<keyword id="KW-0574">Periplasm</keyword>
<keyword id="KW-0732">Signal</keyword>
<reference key="1">
    <citation type="journal article" date="2008" name="DNA Res.">
        <title>Complete genome sequence and comparative analysis of the wild-type commensal Escherichia coli strain SE11 isolated from a healthy adult.</title>
        <authorList>
            <person name="Oshima K."/>
            <person name="Toh H."/>
            <person name="Ogura Y."/>
            <person name="Sasamoto H."/>
            <person name="Morita H."/>
            <person name="Park S.-H."/>
            <person name="Ooka T."/>
            <person name="Iyoda S."/>
            <person name="Taylor T.D."/>
            <person name="Hayashi T."/>
            <person name="Itoh K."/>
            <person name="Hattori M."/>
        </authorList>
    </citation>
    <scope>NUCLEOTIDE SEQUENCE [LARGE SCALE GENOMIC DNA]</scope>
    <source>
        <strain>SE11</strain>
    </source>
</reference>
<organism>
    <name type="scientific">Escherichia coli (strain SE11)</name>
    <dbReference type="NCBI Taxonomy" id="409438"/>
    <lineage>
        <taxon>Bacteria</taxon>
        <taxon>Pseudomonadati</taxon>
        <taxon>Pseudomonadota</taxon>
        <taxon>Gammaproteobacteria</taxon>
        <taxon>Enterobacterales</taxon>
        <taxon>Enterobacteriaceae</taxon>
        <taxon>Escherichia</taxon>
    </lineage>
</organism>
<sequence length="366" mass="38239">MVIKFLSALILLLVTTAAQAERIRDLTSVQGVRQNSLIGYGLVVGLDGTGDQTTQTPFTTQTLNNMLSQLGITVPTGTNMQLKNVAAVMVTASLPPFGRQGQTIDVVVSSMGNAKSLRGGTLLMTPLKGVDSQVYALAQGNILVGGAGASAGGSSVQVNQLNGGRITNGAVIERELPSQFGVGNTLNLQLNDEDFSMAQQIADTINRVRGYGSATALDARAIQVRVPSGNSSQVRFLADIQNMQVNVTPQDAKVVINSRTGSVVMNREVTLDSCAVAQGNLSVTVNRQANVSQPDTPFGGGQTVVTPQTQIDLRQSGGSLQSVRSSASLNNVVRALNALGATPMDLMSILQSMQSAGCLRAKLEII</sequence>
<accession>B6I9F6</accession>
<dbReference type="EMBL" id="AP009240">
    <property type="protein sequence ID" value="BAG76667.1"/>
    <property type="molecule type" value="Genomic_DNA"/>
</dbReference>
<dbReference type="SMR" id="B6I9F6"/>
<dbReference type="KEGG" id="ecy:ECSE_1143"/>
<dbReference type="HOGENOM" id="CLU_045235_1_0_6"/>
<dbReference type="Proteomes" id="UP000008199">
    <property type="component" value="Chromosome"/>
</dbReference>
<dbReference type="GO" id="GO:0009428">
    <property type="term" value="C:bacterial-type flagellum basal body, distal rod, P ring"/>
    <property type="evidence" value="ECO:0007669"/>
    <property type="project" value="InterPro"/>
</dbReference>
<dbReference type="GO" id="GO:0030288">
    <property type="term" value="C:outer membrane-bounded periplasmic space"/>
    <property type="evidence" value="ECO:0007669"/>
    <property type="project" value="InterPro"/>
</dbReference>
<dbReference type="GO" id="GO:0005198">
    <property type="term" value="F:structural molecule activity"/>
    <property type="evidence" value="ECO:0007669"/>
    <property type="project" value="InterPro"/>
</dbReference>
<dbReference type="GO" id="GO:0071973">
    <property type="term" value="P:bacterial-type flagellum-dependent cell motility"/>
    <property type="evidence" value="ECO:0007669"/>
    <property type="project" value="InterPro"/>
</dbReference>
<dbReference type="HAMAP" id="MF_00416">
    <property type="entry name" value="FlgI"/>
    <property type="match status" value="1"/>
</dbReference>
<dbReference type="InterPro" id="IPR001782">
    <property type="entry name" value="Flag_FlgI"/>
</dbReference>
<dbReference type="NCBIfam" id="NF003676">
    <property type="entry name" value="PRK05303.1"/>
    <property type="match status" value="1"/>
</dbReference>
<dbReference type="PANTHER" id="PTHR30381">
    <property type="entry name" value="FLAGELLAR P-RING PERIPLASMIC PROTEIN FLGI"/>
    <property type="match status" value="1"/>
</dbReference>
<dbReference type="PANTHER" id="PTHR30381:SF0">
    <property type="entry name" value="FLAGELLAR P-RING PROTEIN"/>
    <property type="match status" value="1"/>
</dbReference>
<dbReference type="Pfam" id="PF02119">
    <property type="entry name" value="FlgI"/>
    <property type="match status" value="1"/>
</dbReference>
<dbReference type="PRINTS" id="PR01010">
    <property type="entry name" value="FLGPRINGFLGI"/>
</dbReference>
<evidence type="ECO:0000255" key="1">
    <source>
        <dbReference type="HAMAP-Rule" id="MF_00416"/>
    </source>
</evidence>
<proteinExistence type="inferred from homology"/>
<protein>
    <recommendedName>
        <fullName evidence="1">Flagellar P-ring protein</fullName>
    </recommendedName>
    <alternativeName>
        <fullName evidence="1">Basal body P-ring protein</fullName>
    </alternativeName>
</protein>
<name>FLGI_ECOSE</name>
<gene>
    <name evidence="1" type="primary">flgI</name>
    <name type="ordered locus">ECSE_1143</name>
</gene>